<feature type="chain" id="PRO_0000056195" description="Tripartite motif-containing protein 2">
    <location>
        <begin position="1"/>
        <end position="744"/>
    </location>
</feature>
<feature type="repeat" description="Filamin">
    <location>
        <begin position="320"/>
        <end position="421"/>
    </location>
</feature>
<feature type="repeat" description="NHL 1">
    <location>
        <begin position="473"/>
        <end position="516"/>
    </location>
</feature>
<feature type="repeat" description="NHL 2">
    <location>
        <begin position="520"/>
        <end position="563"/>
    </location>
</feature>
<feature type="repeat" description="NHL 3">
    <location>
        <begin position="564"/>
        <end position="605"/>
    </location>
</feature>
<feature type="repeat" description="NHL 4">
    <location>
        <begin position="609"/>
        <end position="652"/>
    </location>
</feature>
<feature type="repeat" description="NHL 5">
    <location>
        <begin position="656"/>
        <end position="699"/>
    </location>
</feature>
<feature type="repeat" description="NHL 6">
    <location>
        <begin position="700"/>
        <end position="743"/>
    </location>
</feature>
<feature type="zinc finger region" description="RING-type" evidence="4">
    <location>
        <begin position="23"/>
        <end position="64"/>
    </location>
</feature>
<feature type="zinc finger region" description="B box-type" evidence="3">
    <location>
        <begin position="113"/>
        <end position="154"/>
    </location>
</feature>
<feature type="region of interest" description="Disordered" evidence="5">
    <location>
        <begin position="432"/>
        <end position="462"/>
    </location>
</feature>
<feature type="binding site" evidence="3">
    <location>
        <position position="118"/>
    </location>
    <ligand>
        <name>Zn(2+)</name>
        <dbReference type="ChEBI" id="CHEBI:29105"/>
    </ligand>
</feature>
<feature type="binding site" evidence="3">
    <location>
        <position position="121"/>
    </location>
    <ligand>
        <name>Zn(2+)</name>
        <dbReference type="ChEBI" id="CHEBI:29105"/>
    </ligand>
</feature>
<feature type="binding site" evidence="3">
    <location>
        <position position="141"/>
    </location>
    <ligand>
        <name>Zn(2+)</name>
        <dbReference type="ChEBI" id="CHEBI:29105"/>
    </ligand>
</feature>
<feature type="binding site" evidence="3">
    <location>
        <position position="146"/>
    </location>
    <ligand>
        <name>Zn(2+)</name>
        <dbReference type="ChEBI" id="CHEBI:29105"/>
    </ligand>
</feature>
<feature type="modified residue" description="Phosphoserine" evidence="1">
    <location>
        <position position="10"/>
    </location>
</feature>
<feature type="modified residue" description="Phosphothreonine" evidence="2">
    <location>
        <position position="371"/>
    </location>
</feature>
<feature type="modified residue" description="Phosphoserine" evidence="2">
    <location>
        <position position="375"/>
    </location>
</feature>
<feature type="modified residue" description="Phosphoserine" evidence="2">
    <location>
        <position position="424"/>
    </location>
</feature>
<feature type="modified residue" description="Phosphoserine" evidence="2">
    <location>
        <position position="428"/>
    </location>
</feature>
<feature type="splice variant" id="VSP_046923" description="In isoform 2." evidence="10 11">
    <original>M</original>
    <variation>MHRSGRYGTQQQRAGSKTAGPPCQWSRM</variation>
    <location>
        <position position="1"/>
    </location>
</feature>
<feature type="sequence variant" id="VAR_070874" description="In CMT2R; reduced stability of the mutant protein; dbSNP:rs587777063." evidence="7">
    <original>E</original>
    <variation>V</variation>
    <location>
        <position position="227"/>
    </location>
</feature>
<feature type="sequence conflict" description="In Ref. 5; AAH05016." evidence="12" ref="5">
    <original>FKVYRYLQ</original>
    <variation>LILIYSRHLFFYESKC</variation>
    <location>
        <begin position="737"/>
        <end position="744"/>
    </location>
</feature>
<feature type="helix" evidence="15">
    <location>
        <begin position="11"/>
        <end position="20"/>
    </location>
</feature>
<feature type="turn" evidence="15">
    <location>
        <begin position="24"/>
        <end position="26"/>
    </location>
</feature>
<feature type="strand" evidence="15">
    <location>
        <begin position="31"/>
        <end position="35"/>
    </location>
</feature>
<feature type="strand" evidence="15">
    <location>
        <begin position="41"/>
        <end position="43"/>
    </location>
</feature>
<feature type="helix" evidence="15">
    <location>
        <begin position="44"/>
        <end position="50"/>
    </location>
</feature>
<feature type="strand" evidence="15">
    <location>
        <begin position="57"/>
        <end position="59"/>
    </location>
</feature>
<feature type="turn" evidence="15">
    <location>
        <begin position="61"/>
        <end position="63"/>
    </location>
</feature>
<feature type="strand" evidence="15">
    <location>
        <begin position="66"/>
        <end position="68"/>
    </location>
</feature>
<feature type="helix" evidence="15">
    <location>
        <begin position="74"/>
        <end position="76"/>
    </location>
</feature>
<feature type="helix" evidence="15">
    <location>
        <begin position="81"/>
        <end position="91"/>
    </location>
</feature>
<feature type="strand" evidence="14">
    <location>
        <begin position="471"/>
        <end position="476"/>
    </location>
</feature>
<feature type="strand" evidence="14">
    <location>
        <begin position="478"/>
        <end position="482"/>
    </location>
</feature>
<feature type="strand" evidence="14">
    <location>
        <begin position="485"/>
        <end position="494"/>
    </location>
</feature>
<feature type="strand" evidence="14">
    <location>
        <begin position="498"/>
        <end position="504"/>
    </location>
</feature>
<feature type="turn" evidence="14">
    <location>
        <begin position="505"/>
        <end position="508"/>
    </location>
</feature>
<feature type="strand" evidence="14">
    <location>
        <begin position="509"/>
        <end position="514"/>
    </location>
</feature>
<feature type="strand" evidence="14">
    <location>
        <begin position="519"/>
        <end position="523"/>
    </location>
</feature>
<feature type="strand" evidence="14">
    <location>
        <begin position="526"/>
        <end position="529"/>
    </location>
</feature>
<feature type="strand" evidence="14">
    <location>
        <begin position="533"/>
        <end position="541"/>
    </location>
</feature>
<feature type="strand" evidence="14">
    <location>
        <begin position="547"/>
        <end position="551"/>
    </location>
</feature>
<feature type="turn" evidence="14">
    <location>
        <begin position="552"/>
        <end position="555"/>
    </location>
</feature>
<feature type="strand" evidence="14">
    <location>
        <begin position="556"/>
        <end position="560"/>
    </location>
</feature>
<feature type="strand" evidence="14">
    <location>
        <begin position="566"/>
        <end position="570"/>
    </location>
</feature>
<feature type="turn" evidence="14">
    <location>
        <begin position="572"/>
        <end position="574"/>
    </location>
</feature>
<feature type="strand" evidence="14">
    <location>
        <begin position="576"/>
        <end position="583"/>
    </location>
</feature>
<feature type="strand" evidence="14">
    <location>
        <begin position="589"/>
        <end position="593"/>
    </location>
</feature>
<feature type="turn" evidence="14">
    <location>
        <begin position="594"/>
        <end position="597"/>
    </location>
</feature>
<feature type="strand" evidence="14">
    <location>
        <begin position="598"/>
        <end position="602"/>
    </location>
</feature>
<feature type="strand" evidence="14">
    <location>
        <begin position="608"/>
        <end position="612"/>
    </location>
</feature>
<feature type="strand" evidence="14">
    <location>
        <begin position="615"/>
        <end position="618"/>
    </location>
</feature>
<feature type="strand" evidence="14">
    <location>
        <begin position="622"/>
        <end position="630"/>
    </location>
</feature>
<feature type="strand" evidence="14">
    <location>
        <begin position="636"/>
        <end position="640"/>
    </location>
</feature>
<feature type="helix" evidence="14">
    <location>
        <begin position="641"/>
        <end position="643"/>
    </location>
</feature>
<feature type="strand" evidence="14">
    <location>
        <begin position="645"/>
        <end position="649"/>
    </location>
</feature>
<feature type="strand" evidence="14">
    <location>
        <begin position="655"/>
        <end position="659"/>
    </location>
</feature>
<feature type="strand" evidence="14">
    <location>
        <begin position="662"/>
        <end position="665"/>
    </location>
</feature>
<feature type="strand" evidence="14">
    <location>
        <begin position="669"/>
        <end position="677"/>
    </location>
</feature>
<feature type="strand" evidence="14">
    <location>
        <begin position="683"/>
        <end position="687"/>
    </location>
</feature>
<feature type="turn" evidence="14">
    <location>
        <begin position="688"/>
        <end position="690"/>
    </location>
</feature>
<feature type="strand" evidence="14">
    <location>
        <begin position="693"/>
        <end position="696"/>
    </location>
</feature>
<feature type="strand" evidence="14">
    <location>
        <begin position="702"/>
        <end position="706"/>
    </location>
</feature>
<feature type="strand" evidence="13">
    <location>
        <begin position="709"/>
        <end position="711"/>
    </location>
</feature>
<feature type="strand" evidence="14">
    <location>
        <begin position="719"/>
        <end position="721"/>
    </location>
</feature>
<feature type="strand" evidence="14">
    <location>
        <begin position="725"/>
        <end position="731"/>
    </location>
</feature>
<feature type="helix" evidence="14">
    <location>
        <begin position="732"/>
        <end position="734"/>
    </location>
</feature>
<feature type="strand" evidence="14">
    <location>
        <begin position="736"/>
        <end position="741"/>
    </location>
</feature>
<proteinExistence type="evidence at protein level"/>
<reference key="1">
    <citation type="journal article" date="2001" name="EMBO J.">
        <title>The tripartite motif family identifies cell compartments.</title>
        <authorList>
            <person name="Reymond A."/>
            <person name="Meroni G."/>
            <person name="Fantozzi A."/>
            <person name="Merla G."/>
            <person name="Cairo S."/>
            <person name="Luzi L."/>
            <person name="Riganelli D."/>
            <person name="Zanaria E."/>
            <person name="Messali S."/>
            <person name="Cainarca S."/>
            <person name="Guffanti A."/>
            <person name="Minucci S."/>
            <person name="Pelicci P.G."/>
            <person name="Ballabio A."/>
        </authorList>
    </citation>
    <scope>NUCLEOTIDE SEQUENCE [MRNA] (ISOFORM 2)</scope>
</reference>
<reference key="2">
    <citation type="journal article" date="1998" name="DNA Res.">
        <title>Prediction of the coding sequences of unidentified human genes. IX. The complete sequences of 100 new cDNA clones from brain which can code for large proteins in vitro.</title>
        <authorList>
            <person name="Nagase T."/>
            <person name="Ishikawa K."/>
            <person name="Miyajima N."/>
            <person name="Tanaka A."/>
            <person name="Kotani H."/>
            <person name="Nomura N."/>
            <person name="Ohara O."/>
        </authorList>
    </citation>
    <scope>NUCLEOTIDE SEQUENCE [LARGE SCALE MRNA] (ISOFORM 2)</scope>
    <source>
        <tissue>Brain</tissue>
    </source>
</reference>
<reference key="3">
    <citation type="journal article" date="2005" name="Nature">
        <title>Generation and annotation of the DNA sequences of human chromosomes 2 and 4.</title>
        <authorList>
            <person name="Hillier L.W."/>
            <person name="Graves T.A."/>
            <person name="Fulton R.S."/>
            <person name="Fulton L.A."/>
            <person name="Pepin K.H."/>
            <person name="Minx P."/>
            <person name="Wagner-McPherson C."/>
            <person name="Layman D."/>
            <person name="Wylie K."/>
            <person name="Sekhon M."/>
            <person name="Becker M.C."/>
            <person name="Fewell G.A."/>
            <person name="Delehaunty K.D."/>
            <person name="Miner T.L."/>
            <person name="Nash W.E."/>
            <person name="Kremitzki C."/>
            <person name="Oddy L."/>
            <person name="Du H."/>
            <person name="Sun H."/>
            <person name="Bradshaw-Cordum H."/>
            <person name="Ali J."/>
            <person name="Carter J."/>
            <person name="Cordes M."/>
            <person name="Harris A."/>
            <person name="Isak A."/>
            <person name="van Brunt A."/>
            <person name="Nguyen C."/>
            <person name="Du F."/>
            <person name="Courtney L."/>
            <person name="Kalicki J."/>
            <person name="Ozersky P."/>
            <person name="Abbott S."/>
            <person name="Armstrong J."/>
            <person name="Belter E.A."/>
            <person name="Caruso L."/>
            <person name="Cedroni M."/>
            <person name="Cotton M."/>
            <person name="Davidson T."/>
            <person name="Desai A."/>
            <person name="Elliott G."/>
            <person name="Erb T."/>
            <person name="Fronick C."/>
            <person name="Gaige T."/>
            <person name="Haakenson W."/>
            <person name="Haglund K."/>
            <person name="Holmes A."/>
            <person name="Harkins R."/>
            <person name="Kim K."/>
            <person name="Kruchowski S.S."/>
            <person name="Strong C.M."/>
            <person name="Grewal N."/>
            <person name="Goyea E."/>
            <person name="Hou S."/>
            <person name="Levy A."/>
            <person name="Martinka S."/>
            <person name="Mead K."/>
            <person name="McLellan M.D."/>
            <person name="Meyer R."/>
            <person name="Randall-Maher J."/>
            <person name="Tomlinson C."/>
            <person name="Dauphin-Kohlberg S."/>
            <person name="Kozlowicz-Reilly A."/>
            <person name="Shah N."/>
            <person name="Swearengen-Shahid S."/>
            <person name="Snider J."/>
            <person name="Strong J.T."/>
            <person name="Thompson J."/>
            <person name="Yoakum M."/>
            <person name="Leonard S."/>
            <person name="Pearman C."/>
            <person name="Trani L."/>
            <person name="Radionenko M."/>
            <person name="Waligorski J.E."/>
            <person name="Wang C."/>
            <person name="Rock S.M."/>
            <person name="Tin-Wollam A.-M."/>
            <person name="Maupin R."/>
            <person name="Latreille P."/>
            <person name="Wendl M.C."/>
            <person name="Yang S.-P."/>
            <person name="Pohl C."/>
            <person name="Wallis J.W."/>
            <person name="Spieth J."/>
            <person name="Bieri T.A."/>
            <person name="Berkowicz N."/>
            <person name="Nelson J.O."/>
            <person name="Osborne J."/>
            <person name="Ding L."/>
            <person name="Meyer R."/>
            <person name="Sabo A."/>
            <person name="Shotland Y."/>
            <person name="Sinha P."/>
            <person name="Wohldmann P.E."/>
            <person name="Cook L.L."/>
            <person name="Hickenbotham M.T."/>
            <person name="Eldred J."/>
            <person name="Williams D."/>
            <person name="Jones T.A."/>
            <person name="She X."/>
            <person name="Ciccarelli F.D."/>
            <person name="Izaurralde E."/>
            <person name="Taylor J."/>
            <person name="Schmutz J."/>
            <person name="Myers R.M."/>
            <person name="Cox D.R."/>
            <person name="Huang X."/>
            <person name="McPherson J.D."/>
            <person name="Mardis E.R."/>
            <person name="Clifton S.W."/>
            <person name="Warren W.C."/>
            <person name="Chinwalla A.T."/>
            <person name="Eddy S.R."/>
            <person name="Marra M.A."/>
            <person name="Ovcharenko I."/>
            <person name="Furey T.S."/>
            <person name="Miller W."/>
            <person name="Eichler E.E."/>
            <person name="Bork P."/>
            <person name="Suyama M."/>
            <person name="Torrents D."/>
            <person name="Waterston R.H."/>
            <person name="Wilson R.K."/>
        </authorList>
    </citation>
    <scope>NUCLEOTIDE SEQUENCE [LARGE SCALE GENOMIC DNA]</scope>
</reference>
<reference key="4">
    <citation type="submission" date="2005-09" db="EMBL/GenBank/DDBJ databases">
        <authorList>
            <person name="Mural R.J."/>
            <person name="Istrail S."/>
            <person name="Sutton G.G."/>
            <person name="Florea L."/>
            <person name="Halpern A.L."/>
            <person name="Mobarry C.M."/>
            <person name="Lippert R."/>
            <person name="Walenz B."/>
            <person name="Shatkay H."/>
            <person name="Dew I."/>
            <person name="Miller J.R."/>
            <person name="Flanigan M.J."/>
            <person name="Edwards N.J."/>
            <person name="Bolanos R."/>
            <person name="Fasulo D."/>
            <person name="Halldorsson B.V."/>
            <person name="Hannenhalli S."/>
            <person name="Turner R."/>
            <person name="Yooseph S."/>
            <person name="Lu F."/>
            <person name="Nusskern D.R."/>
            <person name="Shue B.C."/>
            <person name="Zheng X.H."/>
            <person name="Zhong F."/>
            <person name="Delcher A.L."/>
            <person name="Huson D.H."/>
            <person name="Kravitz S.A."/>
            <person name="Mouchard L."/>
            <person name="Reinert K."/>
            <person name="Remington K.A."/>
            <person name="Clark A.G."/>
            <person name="Waterman M.S."/>
            <person name="Eichler E.E."/>
            <person name="Adams M.D."/>
            <person name="Hunkapiller M.W."/>
            <person name="Myers E.W."/>
            <person name="Venter J.C."/>
        </authorList>
    </citation>
    <scope>NUCLEOTIDE SEQUENCE [LARGE SCALE GENOMIC DNA]</scope>
</reference>
<reference key="5">
    <citation type="journal article" date="2004" name="Genome Res.">
        <title>The status, quality, and expansion of the NIH full-length cDNA project: the Mammalian Gene Collection (MGC).</title>
        <authorList>
            <consortium name="The MGC Project Team"/>
        </authorList>
    </citation>
    <scope>NUCLEOTIDE SEQUENCE [LARGE SCALE MRNA] (ISOFORM 1)</scope>
    <source>
        <tissue>Brain</tissue>
        <tissue>Placenta</tissue>
    </source>
</reference>
<reference key="6">
    <citation type="journal article" date="2007" name="BMC Genomics">
        <title>The full-ORF clone resource of the German cDNA consortium.</title>
        <authorList>
            <person name="Bechtel S."/>
            <person name="Rosenfelder H."/>
            <person name="Duda A."/>
            <person name="Schmidt C.P."/>
            <person name="Ernst U."/>
            <person name="Wellenreuther R."/>
            <person name="Mehrle A."/>
            <person name="Schuster C."/>
            <person name="Bahr A."/>
            <person name="Bloecker H."/>
            <person name="Heubner D."/>
            <person name="Hoerlein A."/>
            <person name="Michel G."/>
            <person name="Wedler H."/>
            <person name="Koehrer K."/>
            <person name="Ottenwaelder B."/>
            <person name="Poustka A."/>
            <person name="Wiemann S."/>
            <person name="Schupp I."/>
        </authorList>
    </citation>
    <scope>NUCLEOTIDE SEQUENCE [LARGE SCALE MRNA] OF 516-744</scope>
    <source>
        <tissue>Fetal kidney</tissue>
    </source>
</reference>
<reference key="7">
    <citation type="journal article" date="2011" name="J. Biol. Chem.">
        <title>Identification of a novel Bcl-2-interacting mediator of cell death (Bim) E3 ligase, tripartite motif-containing protein 2 (TRIM2), and its role in rapid ischemic tolerance-induced neuroprotection.</title>
        <authorList>
            <person name="Thompson S."/>
            <person name="Pearson A.N."/>
            <person name="Ashley M.D."/>
            <person name="Jessick V."/>
            <person name="Murphy B.M."/>
            <person name="Gafken P."/>
            <person name="Henshall D.C."/>
            <person name="Morris K.T."/>
            <person name="Simon R.P."/>
            <person name="Meller R."/>
        </authorList>
    </citation>
    <scope>INTERACTION WITH BCL2L11</scope>
</reference>
<reference key="8">
    <citation type="journal article" date="2013" name="Sci. Transl. Med.">
        <title>siRNA screen for genes that affect Junin virus entry uncovers voltage-gated calcium channels as a therapeutic target.</title>
        <authorList>
            <person name="Lavanya M."/>
            <person name="Cuevas C.D."/>
            <person name="Thomas M."/>
            <person name="Cherry S."/>
            <person name="Ross S.R."/>
        </authorList>
    </citation>
    <scope>FUNCTION</scope>
</reference>
<reference key="9">
    <citation type="journal article" date="2014" name="J. Proteomics">
        <title>An enzyme assisted RP-RPLC approach for in-depth analysis of human liver phosphoproteome.</title>
        <authorList>
            <person name="Bian Y."/>
            <person name="Song C."/>
            <person name="Cheng K."/>
            <person name="Dong M."/>
            <person name="Wang F."/>
            <person name="Huang J."/>
            <person name="Sun D."/>
            <person name="Wang L."/>
            <person name="Ye M."/>
            <person name="Zou H."/>
        </authorList>
    </citation>
    <scope>IDENTIFICATION BY MASS SPECTROMETRY [LARGE SCALE ANALYSIS]</scope>
    <source>
        <tissue>Liver</tissue>
    </source>
</reference>
<reference key="10">
    <citation type="journal article" date="2022" name="Nat. Commun.">
        <title>Divergent self-association properties of paralogous proteins TRIM2 and TRIM3 regulate their E3 ligase activity.</title>
        <authorList>
            <person name="Esposito D."/>
            <person name="Dudley-Fraser J."/>
            <person name="Garza-Garcia A."/>
            <person name="Rittinger K."/>
        </authorList>
    </citation>
    <scope>CATALYTIC ACTIVITY</scope>
    <scope>SUBUNIT</scope>
    <scope>INTERACTION WITH TRIM3</scope>
    <scope>SUBCELLULAR LOCATION</scope>
</reference>
<reference key="11">
    <citation type="journal article" date="2013" name="Hum. Mol. Genet.">
        <title>Deficiency of the E3 ubiquitin ligase TRIM2 in early-onset axonal neuropathy.</title>
        <authorList>
            <person name="Ylikallio E."/>
            <person name="Poeyhoenen R."/>
            <person name="Zimon M."/>
            <person name="De Vriendt E."/>
            <person name="Hilander T."/>
            <person name="Paetau A."/>
            <person name="Jordanova A."/>
            <person name="Loennqvist T."/>
            <person name="Tyynismaa H."/>
        </authorList>
    </citation>
    <scope>VARIANT CMT2R VAL-227</scope>
    <scope>CHARACTERIZATION OF VARIANT CMT2R VAL-227</scope>
</reference>
<dbReference type="EC" id="2.3.2.27" evidence="9"/>
<dbReference type="EMBL" id="AF220018">
    <property type="protein sequence ID" value="AAG53472.1"/>
    <property type="status" value="ALT_INIT"/>
    <property type="molecule type" value="mRNA"/>
</dbReference>
<dbReference type="EMBL" id="AB011089">
    <property type="protein sequence ID" value="BAA25443.1"/>
    <property type="status" value="ALT_INIT"/>
    <property type="molecule type" value="mRNA"/>
</dbReference>
<dbReference type="EMBL" id="AC013477">
    <property type="status" value="NOT_ANNOTATED_CDS"/>
    <property type="molecule type" value="Genomic_DNA"/>
</dbReference>
<dbReference type="EMBL" id="AC114791">
    <property type="status" value="NOT_ANNOTATED_CDS"/>
    <property type="molecule type" value="Genomic_DNA"/>
</dbReference>
<dbReference type="EMBL" id="CH471056">
    <property type="protein sequence ID" value="EAX04960.1"/>
    <property type="molecule type" value="Genomic_DNA"/>
</dbReference>
<dbReference type="EMBL" id="CH471056">
    <property type="protein sequence ID" value="EAX04962.1"/>
    <property type="molecule type" value="Genomic_DNA"/>
</dbReference>
<dbReference type="EMBL" id="BC005016">
    <property type="protein sequence ID" value="AAH05016.1"/>
    <property type="molecule type" value="mRNA"/>
</dbReference>
<dbReference type="EMBL" id="BC011052">
    <property type="protein sequence ID" value="AAH11052.1"/>
    <property type="molecule type" value="mRNA"/>
</dbReference>
<dbReference type="EMBL" id="AL110234">
    <property type="protein sequence ID" value="CAB53687.2"/>
    <property type="molecule type" value="mRNA"/>
</dbReference>
<dbReference type="CCDS" id="CCDS3781.2">
    <molecule id="Q9C040-2"/>
</dbReference>
<dbReference type="CCDS" id="CCDS47147.1">
    <molecule id="Q9C040-1"/>
</dbReference>
<dbReference type="PIR" id="T00082">
    <property type="entry name" value="T00082"/>
</dbReference>
<dbReference type="RefSeq" id="NP_001123539.1">
    <molecule id="Q9C040-1"/>
    <property type="nucleotide sequence ID" value="NM_001130067.2"/>
</dbReference>
<dbReference type="RefSeq" id="NP_001362441.1">
    <molecule id="Q9C040-1"/>
    <property type="nucleotide sequence ID" value="NM_001375512.1"/>
</dbReference>
<dbReference type="RefSeq" id="NP_001362442.1">
    <molecule id="Q9C040-1"/>
    <property type="nucleotide sequence ID" value="NM_001375513.1"/>
</dbReference>
<dbReference type="RefSeq" id="NP_001362443.1">
    <molecule id="Q9C040-1"/>
    <property type="nucleotide sequence ID" value="NM_001375514.1"/>
</dbReference>
<dbReference type="RefSeq" id="NP_001362444.1">
    <molecule id="Q9C040-1"/>
    <property type="nucleotide sequence ID" value="NM_001375515.1"/>
</dbReference>
<dbReference type="RefSeq" id="NP_001362445.1">
    <molecule id="Q9C040-1"/>
    <property type="nucleotide sequence ID" value="NM_001375516.1"/>
</dbReference>
<dbReference type="RefSeq" id="NP_001362446.1">
    <molecule id="Q9C040-1"/>
    <property type="nucleotide sequence ID" value="NM_001375517.1"/>
</dbReference>
<dbReference type="RefSeq" id="NP_056086.2">
    <molecule id="Q9C040-2"/>
    <property type="nucleotide sequence ID" value="NM_015271.5"/>
</dbReference>
<dbReference type="RefSeq" id="XP_016863433.1">
    <property type="nucleotide sequence ID" value="XM_017007944.1"/>
</dbReference>
<dbReference type="RefSeq" id="XP_016863434.1">
    <property type="nucleotide sequence ID" value="XM_017007945.1"/>
</dbReference>
<dbReference type="RefSeq" id="XP_016863437.1">
    <molecule id="Q9C040-1"/>
    <property type="nucleotide sequence ID" value="XM_017007948.3"/>
</dbReference>
<dbReference type="RefSeq" id="XP_016863438.1">
    <property type="nucleotide sequence ID" value="XM_017007949.1"/>
</dbReference>
<dbReference type="RefSeq" id="XP_016863439.1">
    <property type="nucleotide sequence ID" value="XM_017007950.1"/>
</dbReference>
<dbReference type="RefSeq" id="XP_016863440.1">
    <property type="nucleotide sequence ID" value="XM_017007951.1"/>
</dbReference>
<dbReference type="RefSeq" id="XP_016863441.1">
    <property type="nucleotide sequence ID" value="XM_017007952.1"/>
</dbReference>
<dbReference type="RefSeq" id="XP_054205464.1">
    <molecule id="Q9C040-1"/>
    <property type="nucleotide sequence ID" value="XM_054349489.1"/>
</dbReference>
<dbReference type="PDB" id="7B2R">
    <property type="method" value="X-ray"/>
    <property type="resolution" value="1.60 A"/>
    <property type="chains" value="A/B=466-740"/>
</dbReference>
<dbReference type="PDB" id="7B96">
    <property type="method" value="X-ray"/>
    <property type="resolution" value="1.80 A"/>
    <property type="chains" value="A/B=469-744"/>
</dbReference>
<dbReference type="PDB" id="7QRV">
    <property type="method" value="X-ray"/>
    <property type="resolution" value="1.45 A"/>
    <property type="chains" value="A/B/C/D=466-744"/>
</dbReference>
<dbReference type="PDB" id="7ZJ3">
    <property type="method" value="X-ray"/>
    <property type="resolution" value="2.53 A"/>
    <property type="chains" value="A/D/G/J=2-95"/>
</dbReference>
<dbReference type="PDB" id="8A38">
    <property type="method" value="X-ray"/>
    <property type="resolution" value="2.20 A"/>
    <property type="chains" value="A/B/C=8-100"/>
</dbReference>
<dbReference type="PDB" id="8AMS">
    <property type="method" value="X-ray"/>
    <property type="resolution" value="2.40 A"/>
    <property type="chains" value="C/D=8-157"/>
</dbReference>
<dbReference type="PDBsum" id="7B2R"/>
<dbReference type="PDBsum" id="7B96"/>
<dbReference type="PDBsum" id="7QRV"/>
<dbReference type="PDBsum" id="7ZJ3"/>
<dbReference type="PDBsum" id="8A38"/>
<dbReference type="PDBsum" id="8AMS"/>
<dbReference type="SMR" id="Q9C040"/>
<dbReference type="BioGRID" id="116910">
    <property type="interactions" value="55"/>
</dbReference>
<dbReference type="FunCoup" id="Q9C040">
    <property type="interactions" value="1430"/>
</dbReference>
<dbReference type="IntAct" id="Q9C040">
    <property type="interactions" value="37"/>
</dbReference>
<dbReference type="MINT" id="Q9C040"/>
<dbReference type="STRING" id="9606.ENSP00000339659"/>
<dbReference type="iPTMnet" id="Q9C040"/>
<dbReference type="PhosphoSitePlus" id="Q9C040"/>
<dbReference type="SwissPalm" id="Q9C040"/>
<dbReference type="BioMuta" id="TRIM2"/>
<dbReference type="DMDM" id="21363034"/>
<dbReference type="jPOST" id="Q9C040"/>
<dbReference type="MassIVE" id="Q9C040"/>
<dbReference type="PaxDb" id="9606-ENSP00000339659"/>
<dbReference type="PeptideAtlas" id="Q9C040"/>
<dbReference type="ProteomicsDB" id="79960">
    <molecule id="Q9C040-1"/>
</dbReference>
<dbReference type="Pumba" id="Q9C040"/>
<dbReference type="Antibodypedia" id="27852">
    <property type="antibodies" value="362 antibodies from 30 providers"/>
</dbReference>
<dbReference type="DNASU" id="23321"/>
<dbReference type="Ensembl" id="ENST00000338700.10">
    <molecule id="Q9C040-2"/>
    <property type="protein sequence ID" value="ENSP00000339659.5"/>
    <property type="gene ID" value="ENSG00000109654.16"/>
</dbReference>
<dbReference type="Ensembl" id="ENST00000437508.7">
    <molecule id="Q9C040-1"/>
    <property type="protein sequence ID" value="ENSP00000415812.2"/>
    <property type="gene ID" value="ENSG00000109654.16"/>
</dbReference>
<dbReference type="Ensembl" id="ENST00000674874.1">
    <molecule id="Q9C040-1"/>
    <property type="protein sequence ID" value="ENSP00000502519.1"/>
    <property type="gene ID" value="ENSG00000109654.16"/>
</dbReference>
<dbReference type="Ensembl" id="ENST00000674876.1">
    <molecule id="Q9C040-1"/>
    <property type="protein sequence ID" value="ENSP00000501652.1"/>
    <property type="gene ID" value="ENSG00000109654.16"/>
</dbReference>
<dbReference type="Ensembl" id="ENST00000674976.1">
    <molecule id="Q9C040-1"/>
    <property type="protein sequence ID" value="ENSP00000502356.1"/>
    <property type="gene ID" value="ENSG00000109654.16"/>
</dbReference>
<dbReference type="Ensembl" id="ENST00000675054.1">
    <molecule id="Q9C040-1"/>
    <property type="protein sequence ID" value="ENSP00000502543.1"/>
    <property type="gene ID" value="ENSG00000109654.16"/>
</dbReference>
<dbReference type="Ensembl" id="ENST00000675159.1">
    <molecule id="Q9C040-1"/>
    <property type="protein sequence ID" value="ENSP00000501792.1"/>
    <property type="gene ID" value="ENSG00000109654.16"/>
</dbReference>
<dbReference type="Ensembl" id="ENST00000675293.1">
    <molecule id="Q9C040-1"/>
    <property type="protein sequence ID" value="ENSP00000502348.1"/>
    <property type="gene ID" value="ENSG00000109654.16"/>
</dbReference>
<dbReference type="Ensembl" id="ENST00000675315.1">
    <molecule id="Q9C040-1"/>
    <property type="protein sequence ID" value="ENSP00000502676.1"/>
    <property type="gene ID" value="ENSG00000109654.16"/>
</dbReference>
<dbReference type="Ensembl" id="ENST00000675384.1">
    <molecule id="Q9C040-1"/>
    <property type="protein sequence ID" value="ENSP00000502114.1"/>
    <property type="gene ID" value="ENSG00000109654.16"/>
</dbReference>
<dbReference type="Ensembl" id="ENST00000675745.1">
    <molecule id="Q9C040-1"/>
    <property type="protein sequence ID" value="ENSP00000501662.1"/>
    <property type="gene ID" value="ENSG00000109654.16"/>
</dbReference>
<dbReference type="Ensembl" id="ENST00000675835.1">
    <molecule id="Q9C040-1"/>
    <property type="protein sequence ID" value="ENSP00000501951.1"/>
    <property type="gene ID" value="ENSG00000109654.16"/>
</dbReference>
<dbReference type="Ensembl" id="ENST00000676172.1">
    <molecule id="Q9C040-1"/>
    <property type="protein sequence ID" value="ENSP00000501822.1"/>
    <property type="gene ID" value="ENSG00000109654.16"/>
</dbReference>
<dbReference type="Ensembl" id="ENST00000676252.1">
    <molecule id="Q9C040-1"/>
    <property type="protein sequence ID" value="ENSP00000501586.1"/>
    <property type="gene ID" value="ENSG00000109654.16"/>
</dbReference>
<dbReference type="Ensembl" id="ENST00000676264.1">
    <molecule id="Q9C040-1"/>
    <property type="protein sequence ID" value="ENSP00000502089.1"/>
    <property type="gene ID" value="ENSG00000109654.16"/>
</dbReference>
<dbReference type="Ensembl" id="ENST00000676348.1">
    <molecule id="Q9C040-1"/>
    <property type="protein sequence ID" value="ENSP00000502159.1"/>
    <property type="gene ID" value="ENSG00000109654.16"/>
</dbReference>
<dbReference type="Ensembl" id="ENST00000676374.1">
    <molecule id="Q9C040-1"/>
    <property type="protein sequence ID" value="ENSP00000502273.1"/>
    <property type="gene ID" value="ENSG00000109654.16"/>
</dbReference>
<dbReference type="Ensembl" id="ENST00000676423.1">
    <molecule id="Q9C040-1"/>
    <property type="protein sequence ID" value="ENSP00000501612.1"/>
    <property type="gene ID" value="ENSG00000109654.16"/>
</dbReference>
<dbReference type="Ensembl" id="ENST00000676458.1">
    <molecule id="Q9C040-1"/>
    <property type="protein sequence ID" value="ENSP00000501994.1"/>
    <property type="gene ID" value="ENSG00000109654.16"/>
</dbReference>
<dbReference type="GeneID" id="23321"/>
<dbReference type="KEGG" id="hsa:23321"/>
<dbReference type="MANE-Select" id="ENST00000338700.10">
    <molecule id="Q9C040-2"/>
    <property type="protein sequence ID" value="ENSP00000339659.5"/>
    <property type="RefSeq nucleotide sequence ID" value="NM_015271.5"/>
    <property type="RefSeq protein sequence ID" value="NP_056086.2"/>
</dbReference>
<dbReference type="UCSC" id="uc003ing.3">
    <molecule id="Q9C040-1"/>
    <property type="organism name" value="human"/>
</dbReference>
<dbReference type="AGR" id="HGNC:15974"/>
<dbReference type="CTD" id="23321"/>
<dbReference type="DisGeNET" id="23321"/>
<dbReference type="GeneCards" id="TRIM2"/>
<dbReference type="GeneReviews" id="TRIM2"/>
<dbReference type="HGNC" id="HGNC:15974">
    <property type="gene designation" value="TRIM2"/>
</dbReference>
<dbReference type="HPA" id="ENSG00000109654">
    <property type="expression patterns" value="Tissue enhanced (brain)"/>
</dbReference>
<dbReference type="MalaCards" id="TRIM2"/>
<dbReference type="MIM" id="614141">
    <property type="type" value="gene"/>
</dbReference>
<dbReference type="MIM" id="615490">
    <property type="type" value="phenotype"/>
</dbReference>
<dbReference type="neXtProt" id="NX_Q9C040"/>
<dbReference type="OpenTargets" id="ENSG00000109654"/>
<dbReference type="Orphanet" id="397968">
    <property type="disease" value="Charcot-Marie-Tooth disease type 2R"/>
</dbReference>
<dbReference type="PharmGKB" id="PA38070"/>
<dbReference type="VEuPathDB" id="HostDB:ENSG00000109654"/>
<dbReference type="eggNOG" id="KOG2177">
    <property type="taxonomic scope" value="Eukaryota"/>
</dbReference>
<dbReference type="GeneTree" id="ENSGT00940000155905"/>
<dbReference type="HOGENOM" id="CLU_008645_5_0_1"/>
<dbReference type="InParanoid" id="Q9C040"/>
<dbReference type="OMA" id="RECTILD"/>
<dbReference type="OrthoDB" id="342730at2759"/>
<dbReference type="PAN-GO" id="Q9C040">
    <property type="GO annotations" value="3 GO annotations based on evolutionary models"/>
</dbReference>
<dbReference type="PhylomeDB" id="Q9C040"/>
<dbReference type="TreeFam" id="TF331018"/>
<dbReference type="PathwayCommons" id="Q9C040"/>
<dbReference type="Reactome" id="R-HSA-877300">
    <property type="pathway name" value="Interferon gamma signaling"/>
</dbReference>
<dbReference type="SignaLink" id="Q9C040"/>
<dbReference type="SIGNOR" id="Q9C040"/>
<dbReference type="UniPathway" id="UPA00143"/>
<dbReference type="BioGRID-ORCS" id="23321">
    <property type="hits" value="12 hits in 1192 CRISPR screens"/>
</dbReference>
<dbReference type="CD-CODE" id="DEE660B4">
    <property type="entry name" value="Stress granule"/>
</dbReference>
<dbReference type="CD-CODE" id="FB4E32DD">
    <property type="entry name" value="Presynaptic clusters and postsynaptic densities"/>
</dbReference>
<dbReference type="ChiTaRS" id="TRIM2">
    <property type="organism name" value="human"/>
</dbReference>
<dbReference type="GenomeRNAi" id="23321"/>
<dbReference type="Pharos" id="Q9C040">
    <property type="development level" value="Tbio"/>
</dbReference>
<dbReference type="PRO" id="PR:Q9C040"/>
<dbReference type="Proteomes" id="UP000005640">
    <property type="component" value="Chromosome 4"/>
</dbReference>
<dbReference type="RNAct" id="Q9C040">
    <property type="molecule type" value="protein"/>
</dbReference>
<dbReference type="Bgee" id="ENSG00000109654">
    <property type="expression patterns" value="Expressed in inferior olivary complex and 209 other cell types or tissues"/>
</dbReference>
<dbReference type="ExpressionAtlas" id="Q9C040">
    <property type="expression patterns" value="baseline and differential"/>
</dbReference>
<dbReference type="GO" id="GO:0005737">
    <property type="term" value="C:cytoplasm"/>
    <property type="evidence" value="ECO:0000314"/>
    <property type="project" value="UniProtKB"/>
</dbReference>
<dbReference type="GO" id="GO:0061630">
    <property type="term" value="F:ubiquitin protein ligase activity"/>
    <property type="evidence" value="ECO:0000318"/>
    <property type="project" value="GO_Central"/>
</dbReference>
<dbReference type="GO" id="GO:0004842">
    <property type="term" value="F:ubiquitin-protein transferase activity"/>
    <property type="evidence" value="ECO:0000250"/>
    <property type="project" value="UniProtKB"/>
</dbReference>
<dbReference type="GO" id="GO:0008270">
    <property type="term" value="F:zinc ion binding"/>
    <property type="evidence" value="ECO:0000303"/>
    <property type="project" value="UniProtKB"/>
</dbReference>
<dbReference type="GO" id="GO:1990830">
    <property type="term" value="P:cellular response to leukemia inhibitory factor"/>
    <property type="evidence" value="ECO:0007669"/>
    <property type="project" value="Ensembl"/>
</dbReference>
<dbReference type="GO" id="GO:0043161">
    <property type="term" value="P:proteasome-mediated ubiquitin-dependent protein catabolic process"/>
    <property type="evidence" value="ECO:0000318"/>
    <property type="project" value="GO_Central"/>
</dbReference>
<dbReference type="GO" id="GO:0000209">
    <property type="term" value="P:protein polyubiquitination"/>
    <property type="evidence" value="ECO:0000318"/>
    <property type="project" value="GO_Central"/>
</dbReference>
<dbReference type="GO" id="GO:0043523">
    <property type="term" value="P:regulation of neuron apoptotic process"/>
    <property type="evidence" value="ECO:0000250"/>
    <property type="project" value="UniProtKB"/>
</dbReference>
<dbReference type="CDD" id="cd19824">
    <property type="entry name" value="Bbox2_TRIM2_C-VII"/>
    <property type="match status" value="1"/>
</dbReference>
<dbReference type="CDD" id="cd14960">
    <property type="entry name" value="NHL_TRIM2_like"/>
    <property type="match status" value="1"/>
</dbReference>
<dbReference type="CDD" id="cd16767">
    <property type="entry name" value="RING-HC_TRIM2"/>
    <property type="match status" value="1"/>
</dbReference>
<dbReference type="FunFam" id="2.120.10.30:FF:000007">
    <property type="entry name" value="Putative tripartite motif-containing protein 2"/>
    <property type="match status" value="1"/>
</dbReference>
<dbReference type="FunFam" id="2.120.10.30:FF:000004">
    <property type="entry name" value="Tripartite motif containing 2"/>
    <property type="match status" value="1"/>
</dbReference>
<dbReference type="FunFam" id="3.30.40.10:FF:000032">
    <property type="entry name" value="Tripartite motif containing 2"/>
    <property type="match status" value="1"/>
</dbReference>
<dbReference type="FunFam" id="2.60.40.10:FF:000198">
    <property type="entry name" value="Tripartite motif-containing protein 2"/>
    <property type="match status" value="1"/>
</dbReference>
<dbReference type="FunFam" id="3.30.160.60:FF:000154">
    <property type="entry name" value="Tripartite motif-containing protein 2"/>
    <property type="match status" value="1"/>
</dbReference>
<dbReference type="Gene3D" id="3.30.160.60">
    <property type="entry name" value="Classic Zinc Finger"/>
    <property type="match status" value="1"/>
</dbReference>
<dbReference type="Gene3D" id="2.60.40.10">
    <property type="entry name" value="Immunoglobulins"/>
    <property type="match status" value="1"/>
</dbReference>
<dbReference type="Gene3D" id="2.120.10.30">
    <property type="entry name" value="TolB, C-terminal domain"/>
    <property type="match status" value="2"/>
</dbReference>
<dbReference type="Gene3D" id="3.30.40.10">
    <property type="entry name" value="Zinc/RING finger domain, C3HC4 (zinc finger)"/>
    <property type="match status" value="1"/>
</dbReference>
<dbReference type="InterPro" id="IPR011042">
    <property type="entry name" value="6-blade_b-propeller_TolB-like"/>
</dbReference>
<dbReference type="InterPro" id="IPR003649">
    <property type="entry name" value="Bbox_C"/>
</dbReference>
<dbReference type="InterPro" id="IPR017868">
    <property type="entry name" value="Filamin/ABP280_repeat-like"/>
</dbReference>
<dbReference type="InterPro" id="IPR001298">
    <property type="entry name" value="Filamin/ABP280_rpt"/>
</dbReference>
<dbReference type="InterPro" id="IPR013783">
    <property type="entry name" value="Ig-like_fold"/>
</dbReference>
<dbReference type="InterPro" id="IPR014756">
    <property type="entry name" value="Ig_E-set"/>
</dbReference>
<dbReference type="InterPro" id="IPR001258">
    <property type="entry name" value="NHL_repeat"/>
</dbReference>
<dbReference type="InterPro" id="IPR050952">
    <property type="entry name" value="TRIM-NHL_E3_ligases"/>
</dbReference>
<dbReference type="InterPro" id="IPR027370">
    <property type="entry name" value="Znf-RING_euk"/>
</dbReference>
<dbReference type="InterPro" id="IPR000315">
    <property type="entry name" value="Znf_B-box"/>
</dbReference>
<dbReference type="InterPro" id="IPR001841">
    <property type="entry name" value="Znf_RING"/>
</dbReference>
<dbReference type="InterPro" id="IPR013083">
    <property type="entry name" value="Znf_RING/FYVE/PHD"/>
</dbReference>
<dbReference type="InterPro" id="IPR017907">
    <property type="entry name" value="Znf_RING_CS"/>
</dbReference>
<dbReference type="PANTHER" id="PTHR24104">
    <property type="entry name" value="E3 UBIQUITIN-PROTEIN LIGASE NHLRC1-RELATED"/>
    <property type="match status" value="1"/>
</dbReference>
<dbReference type="PANTHER" id="PTHR24104:SF58">
    <property type="entry name" value="TRIPARTITE MOTIF-CONTAINING PROTEIN 2"/>
    <property type="match status" value="1"/>
</dbReference>
<dbReference type="Pfam" id="PF00630">
    <property type="entry name" value="Filamin"/>
    <property type="match status" value="1"/>
</dbReference>
<dbReference type="Pfam" id="PF01436">
    <property type="entry name" value="NHL"/>
    <property type="match status" value="6"/>
</dbReference>
<dbReference type="Pfam" id="PF00643">
    <property type="entry name" value="zf-B_box"/>
    <property type="match status" value="1"/>
</dbReference>
<dbReference type="Pfam" id="PF13445">
    <property type="entry name" value="zf-RING_UBOX"/>
    <property type="match status" value="1"/>
</dbReference>
<dbReference type="SMART" id="SM00502">
    <property type="entry name" value="BBC"/>
    <property type="match status" value="1"/>
</dbReference>
<dbReference type="SMART" id="SM00336">
    <property type="entry name" value="BBOX"/>
    <property type="match status" value="1"/>
</dbReference>
<dbReference type="SMART" id="SM00557">
    <property type="entry name" value="IG_FLMN"/>
    <property type="match status" value="1"/>
</dbReference>
<dbReference type="SMART" id="SM00184">
    <property type="entry name" value="RING"/>
    <property type="match status" value="1"/>
</dbReference>
<dbReference type="SUPFAM" id="SSF57845">
    <property type="entry name" value="B-box zinc-binding domain"/>
    <property type="match status" value="1"/>
</dbReference>
<dbReference type="SUPFAM" id="SSF81296">
    <property type="entry name" value="E set domains"/>
    <property type="match status" value="1"/>
</dbReference>
<dbReference type="SUPFAM" id="SSF101898">
    <property type="entry name" value="NHL repeat"/>
    <property type="match status" value="1"/>
</dbReference>
<dbReference type="SUPFAM" id="SSF57850">
    <property type="entry name" value="RING/U-box"/>
    <property type="match status" value="1"/>
</dbReference>
<dbReference type="PROSITE" id="PS50194">
    <property type="entry name" value="FILAMIN_REPEAT"/>
    <property type="match status" value="1"/>
</dbReference>
<dbReference type="PROSITE" id="PS51125">
    <property type="entry name" value="NHL"/>
    <property type="match status" value="6"/>
</dbReference>
<dbReference type="PROSITE" id="PS50119">
    <property type="entry name" value="ZF_BBOX"/>
    <property type="match status" value="1"/>
</dbReference>
<dbReference type="PROSITE" id="PS00518">
    <property type="entry name" value="ZF_RING_1"/>
    <property type="match status" value="1"/>
</dbReference>
<dbReference type="PROSITE" id="PS50089">
    <property type="entry name" value="ZF_RING_2"/>
    <property type="match status" value="1"/>
</dbReference>
<evidence type="ECO:0000250" key="1">
    <source>
        <dbReference type="UniProtKB" id="D3ZQG6"/>
    </source>
</evidence>
<evidence type="ECO:0000250" key="2">
    <source>
        <dbReference type="UniProtKB" id="Q9ESN6"/>
    </source>
</evidence>
<evidence type="ECO:0000255" key="3">
    <source>
        <dbReference type="PROSITE-ProRule" id="PRU00024"/>
    </source>
</evidence>
<evidence type="ECO:0000255" key="4">
    <source>
        <dbReference type="PROSITE-ProRule" id="PRU00175"/>
    </source>
</evidence>
<evidence type="ECO:0000256" key="5">
    <source>
        <dbReference type="SAM" id="MobiDB-lite"/>
    </source>
</evidence>
<evidence type="ECO:0000269" key="6">
    <source>
    </source>
</evidence>
<evidence type="ECO:0000269" key="7">
    <source>
    </source>
</evidence>
<evidence type="ECO:0000269" key="8">
    <source>
    </source>
</evidence>
<evidence type="ECO:0000269" key="9">
    <source>
    </source>
</evidence>
<evidence type="ECO:0000303" key="10">
    <source>
    </source>
</evidence>
<evidence type="ECO:0000303" key="11">
    <source>
    </source>
</evidence>
<evidence type="ECO:0000305" key="12"/>
<evidence type="ECO:0007829" key="13">
    <source>
        <dbReference type="PDB" id="7B2R"/>
    </source>
</evidence>
<evidence type="ECO:0007829" key="14">
    <source>
        <dbReference type="PDB" id="7QRV"/>
    </source>
</evidence>
<evidence type="ECO:0007829" key="15">
    <source>
        <dbReference type="PDB" id="7ZJ3"/>
    </source>
</evidence>
<name>TRIM2_HUMAN</name>
<accession>Q9C040</accession>
<accession>D3DP09</accession>
<accession>O60272</accession>
<accession>Q9BSI9</accession>
<accession>Q9UFZ1</accession>
<protein>
    <recommendedName>
        <fullName>Tripartite motif-containing protein 2</fullName>
        <ecNumber evidence="9">2.3.2.27</ecNumber>
    </recommendedName>
    <alternativeName>
        <fullName>E3 ubiquitin-protein ligase TRIM2</fullName>
    </alternativeName>
    <alternativeName>
        <fullName>RING finger protein 86</fullName>
    </alternativeName>
    <alternativeName>
        <fullName evidence="12">RING-type E3 ubiquitin transferase TRIM2</fullName>
    </alternativeName>
</protein>
<keyword id="KW-0002">3D-structure</keyword>
<keyword id="KW-0025">Alternative splicing</keyword>
<keyword id="KW-0144">Charcot-Marie-Tooth disease</keyword>
<keyword id="KW-0963">Cytoplasm</keyword>
<keyword id="KW-0225">Disease variant</keyword>
<keyword id="KW-0479">Metal-binding</keyword>
<keyword id="KW-0523">Neurodegeneration</keyword>
<keyword id="KW-0622">Neuropathy</keyword>
<keyword id="KW-0597">Phosphoprotein</keyword>
<keyword id="KW-1267">Proteomics identification</keyword>
<keyword id="KW-1185">Reference proteome</keyword>
<keyword id="KW-0677">Repeat</keyword>
<keyword id="KW-0808">Transferase</keyword>
<keyword id="KW-0832">Ubl conjugation</keyword>
<keyword id="KW-0833">Ubl conjugation pathway</keyword>
<keyword id="KW-0862">Zinc</keyword>
<keyword id="KW-0863">Zinc-finger</keyword>
<organism>
    <name type="scientific">Homo sapiens</name>
    <name type="common">Human</name>
    <dbReference type="NCBI Taxonomy" id="9606"/>
    <lineage>
        <taxon>Eukaryota</taxon>
        <taxon>Metazoa</taxon>
        <taxon>Chordata</taxon>
        <taxon>Craniata</taxon>
        <taxon>Vertebrata</taxon>
        <taxon>Euteleostomi</taxon>
        <taxon>Mammalia</taxon>
        <taxon>Eutheria</taxon>
        <taxon>Euarchontoglires</taxon>
        <taxon>Primates</taxon>
        <taxon>Haplorrhini</taxon>
        <taxon>Catarrhini</taxon>
        <taxon>Hominidae</taxon>
        <taxon>Homo</taxon>
    </lineage>
</organism>
<gene>
    <name type="primary">TRIM2</name>
    <name type="synonym">KIAA0517</name>
    <name type="synonym">RNF86</name>
</gene>
<comment type="function">
    <text evidence="2 8">UBE2D1-dependent E3 ubiquitin-protein ligase that mediates the ubiquitination of NEFL and of phosphorylated BCL2L11. Plays a neuroprotective function. May play a role in neuronal rapid ischemic tolerance. Plays a role in antiviral immunity and limits New World arenavirus infection independently of its ubiquitin ligase activity (PubMed:24068738).</text>
</comment>
<comment type="catalytic activity">
    <reaction evidence="9">
        <text>S-ubiquitinyl-[E2 ubiquitin-conjugating enzyme]-L-cysteine + [acceptor protein]-L-lysine = [E2 ubiquitin-conjugating enzyme]-L-cysteine + N(6)-ubiquitinyl-[acceptor protein]-L-lysine.</text>
        <dbReference type="EC" id="2.3.2.27"/>
    </reaction>
</comment>
<comment type="pathway">
    <text>Protein modification; protein ubiquitination.</text>
</comment>
<comment type="subunit">
    <text evidence="2 6 9">Forms homooligomers (PubMed:36481767). Interacts with TRIM3; this interaction reduces TRIM2 activity (PubMed:36481767). Interacts with myosin V; myosin V may not be a substrate for ubiquitination (By similarity). Interacts with NEFL (By similarity). Interacts with phosphorylated BCL2L11. Interacts with SIRPA (By similarity).</text>
</comment>
<comment type="interaction">
    <interactant intactId="EBI-749840">
        <id>Q9C040</id>
    </interactant>
    <interactant intactId="EBI-6128565">
        <id>Q8IZL9</id>
        <label>CDK20</label>
    </interactant>
    <organismsDiffer>false</organismsDiffer>
    <experiments>3</experiments>
</comment>
<comment type="interaction">
    <interactant intactId="EBI-749840">
        <id>Q9C040</id>
    </interactant>
    <interactant intactId="EBI-10292696">
        <id>Q96Q77</id>
        <label>CIB3</label>
    </interactant>
    <organismsDiffer>false</organismsDiffer>
    <experiments>6</experiments>
</comment>
<comment type="interaction">
    <interactant intactId="EBI-749840">
        <id>Q9C040</id>
    </interactant>
    <interactant intactId="EBI-9091495">
        <id>Q96JB2-2</id>
        <label>COG3</label>
    </interactant>
    <organismsDiffer>false</organismsDiffer>
    <experiments>3</experiments>
</comment>
<comment type="interaction">
    <interactant intactId="EBI-749840">
        <id>Q9C040</id>
    </interactant>
    <interactant intactId="EBI-11954971">
        <id>Q96MP8-2</id>
        <label>KCTD7</label>
    </interactant>
    <organismsDiffer>false</organismsDiffer>
    <experiments>3</experiments>
</comment>
<comment type="interaction">
    <interactant intactId="EBI-749840">
        <id>Q9C040</id>
    </interactant>
    <interactant intactId="EBI-8647013">
        <id>Q6NSJ5</id>
        <label>LRRC8E</label>
    </interactant>
    <organismsDiffer>false</organismsDiffer>
    <experiments>7</experiments>
</comment>
<comment type="interaction">
    <interactant intactId="EBI-749840">
        <id>Q9C040</id>
    </interactant>
    <interactant intactId="EBI-2129889">
        <id>O75382</id>
        <label>TRIM3</label>
    </interactant>
    <organismsDiffer>false</organismsDiffer>
    <experiments>6</experiments>
</comment>
<comment type="interaction">
    <interactant intactId="EBI-749840">
        <id>Q9C040</id>
    </interactant>
    <interactant intactId="EBI-749370">
        <id>Q9BSL1</id>
        <label>UBAC1</label>
    </interactant>
    <organismsDiffer>false</organismsDiffer>
    <experiments>10</experiments>
</comment>
<comment type="interaction">
    <interactant intactId="EBI-749840">
        <id>Q9C040</id>
    </interactant>
    <interactant intactId="EBI-473850">
        <id>P61086</id>
        <label>UBE2K</label>
    </interactant>
    <organismsDiffer>false</organismsDiffer>
    <experiments>3</experiments>
</comment>
<comment type="interaction">
    <interactant intactId="EBI-749840">
        <id>Q9C040</id>
    </interactant>
    <interactant intactId="EBI-25492395">
        <id>PRO_0000449633</id>
        <label>rep</label>
        <dbReference type="UniProtKB" id="P0DTD1"/>
    </interactant>
    <organismsDiffer>true</organismsDiffer>
    <experiments>4</experiments>
</comment>
<comment type="subcellular location">
    <subcellularLocation>
        <location evidence="9">Cytoplasm</location>
    </subcellularLocation>
</comment>
<comment type="alternative products">
    <event type="alternative splicing"/>
    <isoform>
        <id>Q9C040-1</id>
        <name>1</name>
        <sequence type="displayed"/>
    </isoform>
    <isoform>
        <id>Q9C040-2</id>
        <name>2</name>
        <sequence type="described" ref="VSP_046923"/>
    </isoform>
</comment>
<comment type="domain">
    <text evidence="2">The interaction with myosin V is dependent upon its NHL repeats, which form a beta-propeller (NHL) domain containing six blades.</text>
</comment>
<comment type="PTM">
    <text evidence="2">RING-type zinc finger-dependent and UBE2D1-dependent autoubiquitination.</text>
</comment>
<comment type="disease" evidence="7">
    <disease id="DI-03924">
        <name>Charcot-Marie-Tooth disease, axonal, type 2R</name>
        <acronym>CMT2R</acronym>
        <description>An axonal form of Charcot-Marie-Tooth disease, a disorder of the peripheral nervous system, characterized by progressive weakness and atrophy, initially of the peroneal muscles and later of the distal muscles of the arms. Charcot-Marie-Tooth disease is classified in two main groups on the basis of electrophysiologic properties and histopathology: primary peripheral demyelinating neuropathies (designated CMT1 when they are dominantly inherited) and primary peripheral axonal neuropathies (CMT2). Neuropathies of the CMT2 group are characterized by signs of axonal degeneration in the absence of obvious myelin alterations, normal or slightly reduced nerve conduction velocities, and progressive distal muscle weakness and atrophy.</description>
        <dbReference type="MIM" id="615490"/>
    </disease>
    <text>The disease is caused by variants affecting the gene represented in this entry.</text>
</comment>
<comment type="similarity">
    <text evidence="12">Belongs to the TRIM/RBCC family.</text>
</comment>
<comment type="sequence caution" evidence="12">
    <conflict type="erroneous initiation">
        <sequence resource="EMBL-CDS" id="AAG53472"/>
    </conflict>
    <text>Truncated N-terminus.</text>
</comment>
<comment type="sequence caution" evidence="12">
    <conflict type="erroneous initiation">
        <sequence resource="EMBL-CDS" id="BAA25443"/>
    </conflict>
    <text>Extended N-terminus.</text>
</comment>
<sequence length="744" mass="81530">MASEGTNIPSPVVRQIDKQFLICSICLERYKNPKVLPCLHTFCERCLQNYIPAHSLTLSCPVCRQTSILPEKGVAALQNNFFITNLMDVLQRTPGSNAEESSILETVTAVAAGKPLSCPNHDGNVMEFYCQSCETAMCRECTEGEHAEHPTVPLKDVVEQHKASLQVQLDAVNKRLPEIDSALQFISEIIHQLTNQKASIVDDIHSTFDELQKTLNVRKSVLLMELEVNYGLKHKVLQSQLDTLLQGQESIKSCSNFTAQALNHGTETEVLLVKKQMSEKLNELADQDFPLHPRENDQLDFIVETEGLKKSIHNLGTILTTNAVASETVATGEGLRQTIIGQPMSVTITTKDKDGELCKTGNAYLTAELSTPDGSVADGEILDNKNGTYEFLYTVQKEGDFTLSLRLYDQHIRGSPFKLKVIRSADVSPTTEGVKRRVKSPGSGHVKQKAVKRPASMYSTGKRKENPIEDDLIFRVGTKGRNKGEFTNLQGVAASTNGKILIADSNNQCVQIFSNDGQFKSRFGIRGRSPGQLQRPTGVAVHPSGDIIIADYDNKWVSIFSSDGKFKTKIGSGKLMGPKGVSVDRNGHIIVVDNKACCVFIFQPNGKIVTRFGSRGNGDRQFAGPHFAAVNSNNEIIITDFHNHSVKVFNQEGEFMLKFGSNGEGNGQFNAPTGVAVDSNGNIIVADWGNSRIQVFDGSGSFLSYINTSADPLYGPQGLALTSDGHVVVADSGNHCFKVYRYLQ</sequence>